<comment type="function">
    <text evidence="1">Multi-domain repressor protein that negatively regulates transcription of the quinate utilization pathway genes. May mediate its repressor activity by binding directly to the qa-1f activator protein (By similarity).</text>
</comment>
<comment type="domain">
    <text evidence="1">Is homologous throughout its length with the C-terminal 3 domains of the pentafunctional AROM protein. The function of the 2 C-terminal domains may be to act as a molecular sensor that detects the presence of quinate pathway intermediates as a prerequisite for the presumed conformational changes necessary for the control of transcription regulation (By similarity).</text>
</comment>
<comment type="similarity">
    <text evidence="3">In the N-terminal section; belongs to the shikimate kinase family.</text>
</comment>
<comment type="similarity">
    <text evidence="3">In the 2nd section; belongs to the type-I 3-dehydroquinase family.</text>
</comment>
<comment type="similarity">
    <text evidence="3">In the C-terminal section; belongs to the shikimate dehydrogenase family.</text>
</comment>
<evidence type="ECO:0000250" key="1"/>
<evidence type="ECO:0000256" key="2">
    <source>
        <dbReference type="SAM" id="MobiDB-lite"/>
    </source>
</evidence>
<evidence type="ECO:0000305" key="3"/>
<dbReference type="EMBL" id="DQ015972">
    <property type="protein sequence ID" value="AAY41162.1"/>
    <property type="molecule type" value="Genomic_DNA"/>
</dbReference>
<dbReference type="SMR" id="Q4U3U5"/>
<dbReference type="GO" id="GO:0003855">
    <property type="term" value="F:3-dehydroquinate dehydratase activity"/>
    <property type="evidence" value="ECO:0007669"/>
    <property type="project" value="InterPro"/>
</dbReference>
<dbReference type="GO" id="GO:0003866">
    <property type="term" value="F:3-phosphoshikimate 1-carboxyvinyltransferase activity"/>
    <property type="evidence" value="ECO:0007669"/>
    <property type="project" value="TreeGrafter"/>
</dbReference>
<dbReference type="GO" id="GO:0004764">
    <property type="term" value="F:shikimate 3-dehydrogenase (NADP+) activity"/>
    <property type="evidence" value="ECO:0007669"/>
    <property type="project" value="InterPro"/>
</dbReference>
<dbReference type="GO" id="GO:0009423">
    <property type="term" value="P:chorismate biosynthetic process"/>
    <property type="evidence" value="ECO:0007669"/>
    <property type="project" value="TreeGrafter"/>
</dbReference>
<dbReference type="GO" id="GO:0019630">
    <property type="term" value="P:quinate metabolic process"/>
    <property type="evidence" value="ECO:0007669"/>
    <property type="project" value="UniProtKB-KW"/>
</dbReference>
<dbReference type="CDD" id="cd00502">
    <property type="entry name" value="DHQase_I"/>
    <property type="match status" value="1"/>
</dbReference>
<dbReference type="CDD" id="cd01065">
    <property type="entry name" value="NAD_bind_Shikimate_DH"/>
    <property type="match status" value="1"/>
</dbReference>
<dbReference type="FunFam" id="3.40.50.10860:FF:000019">
    <property type="entry name" value="Quinate pathway repressor protein QutR"/>
    <property type="match status" value="1"/>
</dbReference>
<dbReference type="FunFam" id="3.40.50.300:FF:003173">
    <property type="entry name" value="Quinate repressor protein"/>
    <property type="match status" value="1"/>
</dbReference>
<dbReference type="FunFam" id="3.40.50.720:FF:000386">
    <property type="entry name" value="Quinate repressor protein"/>
    <property type="match status" value="1"/>
</dbReference>
<dbReference type="Gene3D" id="3.20.20.70">
    <property type="entry name" value="Aldolase class I"/>
    <property type="match status" value="1"/>
</dbReference>
<dbReference type="Gene3D" id="3.40.50.10860">
    <property type="entry name" value="Leucine Dehydrogenase, chain A, domain 1"/>
    <property type="match status" value="1"/>
</dbReference>
<dbReference type="Gene3D" id="3.40.50.720">
    <property type="entry name" value="NAD(P)-binding Rossmann-like Domain"/>
    <property type="match status" value="1"/>
</dbReference>
<dbReference type="Gene3D" id="3.40.50.300">
    <property type="entry name" value="P-loop containing nucleotide triphosphate hydrolases"/>
    <property type="match status" value="1"/>
</dbReference>
<dbReference type="InterPro" id="IPR013785">
    <property type="entry name" value="Aldolase_TIM"/>
</dbReference>
<dbReference type="InterPro" id="IPR046346">
    <property type="entry name" value="Aminoacid_DH-like_N_sf"/>
</dbReference>
<dbReference type="InterPro" id="IPR001381">
    <property type="entry name" value="DHquinase_I"/>
</dbReference>
<dbReference type="InterPro" id="IPR036291">
    <property type="entry name" value="NAD(P)-bd_dom_sf"/>
</dbReference>
<dbReference type="InterPro" id="IPR027417">
    <property type="entry name" value="P-loop_NTPase"/>
</dbReference>
<dbReference type="InterPro" id="IPR041121">
    <property type="entry name" value="SDH_C"/>
</dbReference>
<dbReference type="InterPro" id="IPR031322">
    <property type="entry name" value="Shikimate/glucono_kinase"/>
</dbReference>
<dbReference type="InterPro" id="IPR013708">
    <property type="entry name" value="Shikimate_DH-bd_N"/>
</dbReference>
<dbReference type="InterPro" id="IPR006151">
    <property type="entry name" value="Shikm_DH/Glu-tRNA_Rdtase"/>
</dbReference>
<dbReference type="PANTHER" id="PTHR21090">
    <property type="entry name" value="AROM/DEHYDROQUINATE SYNTHASE"/>
    <property type="match status" value="1"/>
</dbReference>
<dbReference type="PANTHER" id="PTHR21090:SF27">
    <property type="entry name" value="QUINATE REPRESSOR PROTEIN"/>
    <property type="match status" value="1"/>
</dbReference>
<dbReference type="Pfam" id="PF01487">
    <property type="entry name" value="DHquinase_I"/>
    <property type="match status" value="1"/>
</dbReference>
<dbReference type="Pfam" id="PF18317">
    <property type="entry name" value="SDH_C"/>
    <property type="match status" value="1"/>
</dbReference>
<dbReference type="Pfam" id="PF01488">
    <property type="entry name" value="Shikimate_DH"/>
    <property type="match status" value="1"/>
</dbReference>
<dbReference type="Pfam" id="PF08501">
    <property type="entry name" value="Shikimate_dh_N"/>
    <property type="match status" value="1"/>
</dbReference>
<dbReference type="Pfam" id="PF01202">
    <property type="entry name" value="SKI"/>
    <property type="match status" value="1"/>
</dbReference>
<dbReference type="SUPFAM" id="SSF53223">
    <property type="entry name" value="Aminoacid dehydrogenase-like, N-terminal domain"/>
    <property type="match status" value="1"/>
</dbReference>
<dbReference type="SUPFAM" id="SSF51735">
    <property type="entry name" value="NAD(P)-binding Rossmann-fold domains"/>
    <property type="match status" value="1"/>
</dbReference>
<dbReference type="SUPFAM" id="SSF52540">
    <property type="entry name" value="P-loop containing nucleoside triphosphate hydrolases"/>
    <property type="match status" value="1"/>
</dbReference>
<proteinExistence type="inferred from homology"/>
<name>QUTR_NEUAF</name>
<gene>
    <name type="primary">qa-1s</name>
</gene>
<feature type="chain" id="PRO_0000260165" description="Quinate repressor protein">
    <location>
        <begin position="1"/>
        <end position="919"/>
    </location>
</feature>
<feature type="region of interest" description="Disordered" evidence="2">
    <location>
        <begin position="1"/>
        <end position="27"/>
    </location>
</feature>
<feature type="region of interest" description="Disordered" evidence="2">
    <location>
        <begin position="46"/>
        <end position="83"/>
    </location>
</feature>
<reference key="1">
    <citation type="submission" date="2005-04" db="EMBL/GenBank/DDBJ databases">
        <title>Sequence analysis of genes of the quinic acid (qa) cluster of two homothallic Neurospora species.</title>
        <authorList>
            <person name="Arnett D.R."/>
            <person name="Asch D.K."/>
        </authorList>
    </citation>
    <scope>NUCLEOTIDE SEQUENCE [GENOMIC DNA]</scope>
</reference>
<organism>
    <name type="scientific">Neurospora africana</name>
    <dbReference type="NCBI Taxonomy" id="5143"/>
    <lineage>
        <taxon>Eukaryota</taxon>
        <taxon>Fungi</taxon>
        <taxon>Dikarya</taxon>
        <taxon>Ascomycota</taxon>
        <taxon>Pezizomycotina</taxon>
        <taxon>Sordariomycetes</taxon>
        <taxon>Sordariomycetidae</taxon>
        <taxon>Sordariales</taxon>
        <taxon>Sordariaceae</taxon>
        <taxon>Neurospora</taxon>
    </lineage>
</organism>
<protein>
    <recommendedName>
        <fullName>Quinate repressor protein</fullName>
    </recommendedName>
</protein>
<sequence length="919" mass="100710">MNNIPARHVGDVAARDPLPLPHKSSSVASGMKRSFATMAMLYANDSDTGNSDDAGSNARRPPRPLSNSPSTSNYRVGSWSAPNSPPRRALPYYPITASFDADASIVVAGIRGAGKSTLAIMASTAMKRKIVDLESEFHHLTGLSSSTYKKRHGPADYGRRQITILQNILNLHRTRAILVCSWLERDVQALLQDFSTSNPVIYVLRDAKAIEAHLKGYDKSKVGTLLDATSAVLRRCTRFEFFNVSEENLDTHSGSASPPAVPDQRHTAPYLTLKRAERHFLKFLSLILPKGTIPFVESAFPLASVPVEQRRFTYALALSISAFLDKGVDIQELDAGVDAIEIIVDDLATSESGPASPLGLAPHRASDISRVVGEIRRDTVIPIILHVVFPERALHEEALLVLYMAYLTHALRLAPDYLTVDLRLDSGLLGQLTAVKGITKVIGNKQLADANSPLWGDPSWLLAYQKAQNTGCDLVRLTRPASNSRDNTDIRQFQVAVEAVGGPRLPFISYNTGRLGRTSMCFNEILTPVTPEPFKEDTLGLQNSANRHLQPPLTALEATQALYSAFVHDPMKLYVFGANVGYSLSPAMHNAALKACGIPHHYRPLSTANIGTLREVISDPQFAGASVGLPFKVEIISLTHSLSRHAKAIGAVNTLIPVRHLSADGGIPDEVSMFNNISQAGPVKALYGENTDWIGIRACLRRGLSPANAVRSTSTGLVIGAGGMARAAVYAMLQLGVKKILIFNRTFANAEKLVLHFENLLARDALPLLSTGPRSHDNTSFHIIRSRDELLPENFKNPTMIVSCIPTHTVDNTPDPEFTVPLHWLDNPTGGIVLELDYKCLTSPLLEQTRREAHRGWVAMDGLDLLPEQGFAQFELFTGRRAPRRLMRREVLRAYPDDQEKSYTAQLQPRLNKIATQIS</sequence>
<keyword id="KW-0672">Quinate metabolism</keyword>
<keyword id="KW-0678">Repressor</keyword>
<keyword id="KW-0804">Transcription</keyword>
<keyword id="KW-0805">Transcription regulation</keyword>
<accession>Q4U3U5</accession>